<sequence length="648" mass="68347">MNILGFFQRLGRALQLPIAVLPVAALLLRFGQPDLLNVAFIAQAGGAIFDNLALIFAIGVASSWSKDSAGAAALAGAVGYFVLTKAMVTINPEINMGVLAGIITGLVGGAAYNRWSDIKLPDFLSFFGGKRFVPIATGFFCLVLAAIFGYVWPPVQHAIHAGGEWIVSAGALGSGIFGFINRLLIPTGLHQVLNTIAWFQIGEFTNAAGTVFHGDINRFYAGDGTAGMFMSGFFPIMMFGLPGAALAMYFAAPKERRPMVGGMLLSVAVTAFLTGVTEPLEFLFMFLAPLLYLLHALLTGISLFVATLLGIHAGFSFSAGAIDYALMYNLPAASQNVWMLLVMGVIFFAIYFVVFSLVIRMFNLKTPGREDKEDEIVTEEANSNTEEGLTQLATNYIAAVGGTDNLKAIDACITRLRLTVADSARVNDTMCKRLGASGVVKLNKQTIQVIVGAKAESIGDAMKKVVARGPVAAASAEATPATAAPVAKPQAVPNAVSIAELVSPITGDVVALDQVPDEAFASKAVGDGVAVKPTDKIVVSPAAGTIVKIFNTNHAFCLETEKGAEIVVHMGIDTVALEGKGFKRLVEEGAQVSAGQPILEMDLDYLNANARSMISPVVCSNIDDFSGLIIKAQGHIVAGQTPLYEIKK</sequence>
<accession>P09323</accession>
<dbReference type="EC" id="2.7.1.193" evidence="11"/>
<dbReference type="EMBL" id="M19284">
    <property type="protein sequence ID" value="AAA24192.1"/>
    <property type="molecule type" value="Genomic_DNA"/>
</dbReference>
<dbReference type="EMBL" id="U00096">
    <property type="protein sequence ID" value="AAC73773.1"/>
    <property type="molecule type" value="Genomic_DNA"/>
</dbReference>
<dbReference type="EMBL" id="AP009048">
    <property type="protein sequence ID" value="BAA35327.1"/>
    <property type="molecule type" value="Genomic_DNA"/>
</dbReference>
<dbReference type="PIR" id="B29895">
    <property type="entry name" value="WQEC2N"/>
</dbReference>
<dbReference type="RefSeq" id="NP_415205.1">
    <property type="nucleotide sequence ID" value="NC_000913.3"/>
</dbReference>
<dbReference type="RefSeq" id="WP_001023093.1">
    <property type="nucleotide sequence ID" value="NZ_LN832404.1"/>
</dbReference>
<dbReference type="SMR" id="P09323"/>
<dbReference type="BioGRID" id="4261209">
    <property type="interactions" value="24"/>
</dbReference>
<dbReference type="FunCoup" id="P09323">
    <property type="interactions" value="178"/>
</dbReference>
<dbReference type="STRING" id="511145.b0679"/>
<dbReference type="TCDB" id="4.A.1.1.2">
    <property type="family name" value="the pts glucose-glucoside (glc) family"/>
</dbReference>
<dbReference type="jPOST" id="P09323"/>
<dbReference type="PaxDb" id="511145-b0679"/>
<dbReference type="EnsemblBacteria" id="AAC73773">
    <property type="protein sequence ID" value="AAC73773"/>
    <property type="gene ID" value="b0679"/>
</dbReference>
<dbReference type="GeneID" id="945292"/>
<dbReference type="KEGG" id="ecj:JW0665"/>
<dbReference type="KEGG" id="eco:b0679"/>
<dbReference type="KEGG" id="ecoc:C3026_03375"/>
<dbReference type="PATRIC" id="fig|1411691.4.peg.1598"/>
<dbReference type="EchoBASE" id="EB0629"/>
<dbReference type="eggNOG" id="COG1263">
    <property type="taxonomic scope" value="Bacteria"/>
</dbReference>
<dbReference type="eggNOG" id="COG1264">
    <property type="taxonomic scope" value="Bacteria"/>
</dbReference>
<dbReference type="eggNOG" id="COG2190">
    <property type="taxonomic scope" value="Bacteria"/>
</dbReference>
<dbReference type="HOGENOM" id="CLU_012312_1_3_6"/>
<dbReference type="InParanoid" id="P09323"/>
<dbReference type="OMA" id="CLAIVHC"/>
<dbReference type="OrthoDB" id="7571469at2"/>
<dbReference type="PhylomeDB" id="P09323"/>
<dbReference type="BioCyc" id="EcoCyc:NAGE-MONOMER"/>
<dbReference type="BioCyc" id="MetaCyc:NAGE-MONOMER"/>
<dbReference type="BRENDA" id="2.7.1.193">
    <property type="organism ID" value="2026"/>
</dbReference>
<dbReference type="PRO" id="PR:P09323"/>
<dbReference type="Proteomes" id="UP000000625">
    <property type="component" value="Chromosome"/>
</dbReference>
<dbReference type="GO" id="GO:0019866">
    <property type="term" value="C:organelle inner membrane"/>
    <property type="evidence" value="ECO:0007669"/>
    <property type="project" value="InterPro"/>
</dbReference>
<dbReference type="GO" id="GO:0005886">
    <property type="term" value="C:plasma membrane"/>
    <property type="evidence" value="ECO:0000318"/>
    <property type="project" value="GO_Central"/>
</dbReference>
<dbReference type="GO" id="GO:0016301">
    <property type="term" value="F:kinase activity"/>
    <property type="evidence" value="ECO:0007669"/>
    <property type="project" value="UniProtKB-KW"/>
</dbReference>
<dbReference type="GO" id="GO:0046872">
    <property type="term" value="F:metal ion binding"/>
    <property type="evidence" value="ECO:0007669"/>
    <property type="project" value="UniProtKB-KW"/>
</dbReference>
<dbReference type="GO" id="GO:0015572">
    <property type="term" value="F:N-acetylglucosamine transmembrane transporter activity"/>
    <property type="evidence" value="ECO:0007669"/>
    <property type="project" value="InterPro"/>
</dbReference>
<dbReference type="GO" id="GO:0103111">
    <property type="term" value="F:protein-N(pi)-phosphohistidine--N-acetyl-D-glucosamine phosphotransferase activity"/>
    <property type="evidence" value="ECO:0007669"/>
    <property type="project" value="UniProtKB-EC"/>
</dbReference>
<dbReference type="GO" id="GO:0008982">
    <property type="term" value="F:protein-N(PI)-phosphohistidine-sugar phosphotransferase activity"/>
    <property type="evidence" value="ECO:0007669"/>
    <property type="project" value="InterPro"/>
</dbReference>
<dbReference type="GO" id="GO:0090587">
    <property type="term" value="F:protein-phosphocysteine-glucosamine phosphotransferase system transporter activity"/>
    <property type="evidence" value="ECO:0000269"/>
    <property type="project" value="EcoCyc"/>
</dbReference>
<dbReference type="GO" id="GO:0090586">
    <property type="term" value="F:protein-phosphocysteine-N-acetylglucosamine phosphotransferase system transporter activity"/>
    <property type="evidence" value="ECO:0000314"/>
    <property type="project" value="EcoCyc"/>
</dbReference>
<dbReference type="GO" id="GO:0090563">
    <property type="term" value="F:protein-phosphocysteine-sugar phosphotransferase activity"/>
    <property type="evidence" value="ECO:0000318"/>
    <property type="project" value="GO_Central"/>
</dbReference>
<dbReference type="GO" id="GO:0006974">
    <property type="term" value="P:DNA damage response"/>
    <property type="evidence" value="ECO:0000270"/>
    <property type="project" value="EcoliWiki"/>
</dbReference>
<dbReference type="GO" id="GO:0015764">
    <property type="term" value="P:N-acetylglucosamine transport"/>
    <property type="evidence" value="ECO:0000314"/>
    <property type="project" value="EcoCyc"/>
</dbReference>
<dbReference type="GO" id="GO:0009254">
    <property type="term" value="P:peptidoglycan turnover"/>
    <property type="evidence" value="ECO:0000269"/>
    <property type="project" value="EcoCyc"/>
</dbReference>
<dbReference type="GO" id="GO:0009401">
    <property type="term" value="P:phosphoenolpyruvate-dependent sugar phosphotransferase system"/>
    <property type="evidence" value="ECO:0000314"/>
    <property type="project" value="EcoCyc"/>
</dbReference>
<dbReference type="CDD" id="cd00210">
    <property type="entry name" value="PTS_IIA_glc"/>
    <property type="match status" value="1"/>
</dbReference>
<dbReference type="CDD" id="cd00212">
    <property type="entry name" value="PTS_IIB_glc"/>
    <property type="match status" value="1"/>
</dbReference>
<dbReference type="FunFam" id="2.70.70.10:FF:000001">
    <property type="entry name" value="PTS system glucose-specific IIA component"/>
    <property type="match status" value="1"/>
</dbReference>
<dbReference type="FunFam" id="3.30.1360.60:FF:000001">
    <property type="entry name" value="PTS system glucose-specific IIBC component PtsG"/>
    <property type="match status" value="1"/>
</dbReference>
<dbReference type="Gene3D" id="2.70.70.10">
    <property type="entry name" value="Glucose Permease (Domain IIA)"/>
    <property type="match status" value="1"/>
</dbReference>
<dbReference type="Gene3D" id="3.30.1360.60">
    <property type="entry name" value="Glucose permease domain IIB"/>
    <property type="match status" value="1"/>
</dbReference>
<dbReference type="InterPro" id="IPR011055">
    <property type="entry name" value="Dup_hybrid_motif"/>
</dbReference>
<dbReference type="InterPro" id="IPR036878">
    <property type="entry name" value="Glu_permease_IIB"/>
</dbReference>
<dbReference type="InterPro" id="IPR018113">
    <property type="entry name" value="PTrfase_EIIB_Cys"/>
</dbReference>
<dbReference type="InterPro" id="IPR001127">
    <property type="entry name" value="PTS_EIIA_1_perm"/>
</dbReference>
<dbReference type="InterPro" id="IPR003352">
    <property type="entry name" value="PTS_EIIC"/>
</dbReference>
<dbReference type="InterPro" id="IPR013013">
    <property type="entry name" value="PTS_EIIC_1"/>
</dbReference>
<dbReference type="InterPro" id="IPR050429">
    <property type="entry name" value="PTS_Glucose_EIICBA"/>
</dbReference>
<dbReference type="InterPro" id="IPR001996">
    <property type="entry name" value="PTS_IIB_1"/>
</dbReference>
<dbReference type="InterPro" id="IPR010974">
    <property type="entry name" value="PTS_IIBC_nag"/>
</dbReference>
<dbReference type="NCBIfam" id="TIGR00826">
    <property type="entry name" value="EIIB_glc"/>
    <property type="match status" value="1"/>
</dbReference>
<dbReference type="NCBIfam" id="NF007608">
    <property type="entry name" value="PRK10255.1"/>
    <property type="match status" value="1"/>
</dbReference>
<dbReference type="NCBIfam" id="TIGR00830">
    <property type="entry name" value="PTBA"/>
    <property type="match status" value="1"/>
</dbReference>
<dbReference type="NCBIfam" id="TIGR01998">
    <property type="entry name" value="PTS-II-BC-nag"/>
    <property type="match status" value="1"/>
</dbReference>
<dbReference type="PANTHER" id="PTHR30009">
    <property type="entry name" value="CYTOCHROME C-TYPE SYNTHESIS PROTEIN AND PTS TRANSMEMBRANE COMPONENT"/>
    <property type="match status" value="1"/>
</dbReference>
<dbReference type="PANTHER" id="PTHR30009:SF4">
    <property type="entry name" value="PTS SYSTEM N-ACETYLGLUCOSAMINE-SPECIFIC EIICBA COMPONENT"/>
    <property type="match status" value="1"/>
</dbReference>
<dbReference type="Pfam" id="PF00358">
    <property type="entry name" value="PTS_EIIA_1"/>
    <property type="match status" value="1"/>
</dbReference>
<dbReference type="Pfam" id="PF00367">
    <property type="entry name" value="PTS_EIIB"/>
    <property type="match status" value="1"/>
</dbReference>
<dbReference type="Pfam" id="PF02378">
    <property type="entry name" value="PTS_EIIC"/>
    <property type="match status" value="1"/>
</dbReference>
<dbReference type="SUPFAM" id="SSF51261">
    <property type="entry name" value="Duplicated hybrid motif"/>
    <property type="match status" value="1"/>
</dbReference>
<dbReference type="SUPFAM" id="SSF55604">
    <property type="entry name" value="Glucose permease domain IIB"/>
    <property type="match status" value="1"/>
</dbReference>
<dbReference type="PROSITE" id="PS51093">
    <property type="entry name" value="PTS_EIIA_TYPE_1"/>
    <property type="match status" value="1"/>
</dbReference>
<dbReference type="PROSITE" id="PS00371">
    <property type="entry name" value="PTS_EIIA_TYPE_1_HIS"/>
    <property type="match status" value="1"/>
</dbReference>
<dbReference type="PROSITE" id="PS51098">
    <property type="entry name" value="PTS_EIIB_TYPE_1"/>
    <property type="match status" value="1"/>
</dbReference>
<dbReference type="PROSITE" id="PS01035">
    <property type="entry name" value="PTS_EIIB_TYPE_1_CYS"/>
    <property type="match status" value="1"/>
</dbReference>
<dbReference type="PROSITE" id="PS51103">
    <property type="entry name" value="PTS_EIIC_TYPE_1"/>
    <property type="match status" value="1"/>
</dbReference>
<comment type="function">
    <text evidence="7 9 11 15">The phosphoenolpyruvate-dependent sugar phosphotransferase system (sugar PTS), a major carbohydrate active transport system, catalyzes the phosphorylation of incoming sugar substrates concomitantly with their translocation across the cell membrane (PubMed:4919472). This system is involved in N-acetylglucosamine transport (PubMed:4919472). It can also transport and phosphorylate the antibiotic streptozotocin (PubMed:161156). Could play a significant role in the recycling of peptidoglycan (PubMed:19617367).</text>
</comment>
<comment type="catalytic activity">
    <reaction evidence="11">
        <text>N(pros)-phospho-L-histidyl-[protein] + N-acetyl-D-glucosamine(out) = N-acetyl-D-glucosamine 6-phosphate(in) + L-histidyl-[protein]</text>
        <dbReference type="Rhea" id="RHEA:49240"/>
        <dbReference type="Rhea" id="RHEA-COMP:9745"/>
        <dbReference type="Rhea" id="RHEA-COMP:9746"/>
        <dbReference type="ChEBI" id="CHEBI:29979"/>
        <dbReference type="ChEBI" id="CHEBI:57513"/>
        <dbReference type="ChEBI" id="CHEBI:64837"/>
        <dbReference type="ChEBI" id="CHEBI:506227"/>
        <dbReference type="EC" id="2.7.1.193"/>
    </reaction>
</comment>
<comment type="cofactor">
    <cofactor evidence="1">
        <name>Zn(2+)</name>
        <dbReference type="ChEBI" id="CHEBI:29105"/>
    </cofactor>
</comment>
<comment type="activity regulation">
    <text evidence="7">P-chloromercuribenzoate inhibits the accumulation of both N-acetyl-D-glucosamine and antibiotic streptozotocin (2-deoxy-2-(3-methyl-3-nitrosoureido)-D-glucopyranose). N-acetyl-D-glucosamine is a competitive inhibitor for the uptake of streptozotocin.</text>
</comment>
<comment type="subcellular location">
    <subcellularLocation>
        <location evidence="5 6">Cell inner membrane</location>
        <topology evidence="5 6">Multi-pass membrane protein</topology>
    </subcellularLocation>
</comment>
<comment type="induction">
    <text evidence="8 12">Induced by N-acetylglucosamine-6-phosphate and repressed by NagC.</text>
</comment>
<comment type="domain">
    <text evidence="5">The PTS EIIC type-1 domain forms the PTS system translocation channel and contains the specific substrate-binding site.</text>
</comment>
<comment type="domain">
    <text evidence="4">The PTS EIIB type-1 domain is phosphorylated by phospho-EIIA on a cysteinyl residue. Then, it transfers the phosphoryl group to the sugar substrate concomitantly with the sugar uptake processed by the PTS EIIC type-1 domain.</text>
</comment>
<comment type="domain">
    <text evidence="3">The PTS EIIA type-1 domain is phosphorylated by phospho-HPr on a histidyl residue. Then, it transfers the phosphoryl group to the PTS EIIB type-1 domain.</text>
</comment>
<comment type="PTM">
    <text evidence="10">60% of isolated protein was N-formylated.</text>
</comment>
<comment type="disruption phenotype">
    <text evidence="9">Cells lacking nagE and nagA reduce by 50% the amount of GlcNAc6P. Together with the mutations of the genes of the peptidoglycan recycling pathway (ampG, anmK, murQ, nagK and nagZ), the accumulation of GlcNAc6P is eliminated.</text>
</comment>
<reference key="1">
    <citation type="journal article" date="1988" name="Gene">
        <title>Nucleotide sequences of the Escherichia coli nagE and nagB genes: the structural genes for the N-acetylglucosamine transport protein of the bacterial phosphoenolpyruvate: sugar phosphotransferase system and for glucosamine-6-phosphate deaminase.</title>
        <authorList>
            <person name="Rogers M.J."/>
            <person name="Ohgi T."/>
            <person name="Plumbridge J."/>
            <person name="Soell D."/>
        </authorList>
    </citation>
    <scope>NUCLEOTIDE SEQUENCE [GENOMIC DNA]</scope>
    <scope>FUNCTION</scope>
    <scope>ACTIVE SITE</scope>
</reference>
<reference key="2">
    <citation type="journal article" date="1988" name="Biochemistry">
        <title>Sequence of cloned enzyme IIN-acetylglucosamine of the phosphoenolpyruvate:N-acetylglucosamine phosphotransferase system of Escherichia coli.</title>
        <authorList>
            <person name="Peri K.G."/>
            <person name="Waygood E.B."/>
        </authorList>
    </citation>
    <scope>NUCLEOTIDE SEQUENCE [GENOMIC DNA]</scope>
</reference>
<reference key="3">
    <citation type="journal article" date="1996" name="DNA Res.">
        <title>A 718-kb DNA sequence of the Escherichia coli K-12 genome corresponding to the 12.7-28.0 min region on the linkage map.</title>
        <authorList>
            <person name="Oshima T."/>
            <person name="Aiba H."/>
            <person name="Baba T."/>
            <person name="Fujita K."/>
            <person name="Hayashi K."/>
            <person name="Honjo A."/>
            <person name="Ikemoto K."/>
            <person name="Inada T."/>
            <person name="Itoh T."/>
            <person name="Kajihara M."/>
            <person name="Kanai K."/>
            <person name="Kashimoto K."/>
            <person name="Kimura S."/>
            <person name="Kitagawa M."/>
            <person name="Makino K."/>
            <person name="Masuda S."/>
            <person name="Miki T."/>
            <person name="Mizobuchi K."/>
            <person name="Mori H."/>
            <person name="Motomura K."/>
            <person name="Nakamura Y."/>
            <person name="Nashimoto H."/>
            <person name="Nishio Y."/>
            <person name="Saito N."/>
            <person name="Sampei G."/>
            <person name="Seki Y."/>
            <person name="Tagami H."/>
            <person name="Takemoto K."/>
            <person name="Wada C."/>
            <person name="Yamamoto Y."/>
            <person name="Yano M."/>
            <person name="Horiuchi T."/>
        </authorList>
    </citation>
    <scope>NUCLEOTIDE SEQUENCE [LARGE SCALE GENOMIC DNA]</scope>
    <source>
        <strain>K12 / W3110 / ATCC 27325 / DSM 5911</strain>
    </source>
</reference>
<reference key="4">
    <citation type="journal article" date="1997" name="Science">
        <title>The complete genome sequence of Escherichia coli K-12.</title>
        <authorList>
            <person name="Blattner F.R."/>
            <person name="Plunkett G. III"/>
            <person name="Bloch C.A."/>
            <person name="Perna N.T."/>
            <person name="Burland V."/>
            <person name="Riley M."/>
            <person name="Collado-Vides J."/>
            <person name="Glasner J.D."/>
            <person name="Rode C.K."/>
            <person name="Mayhew G.F."/>
            <person name="Gregor J."/>
            <person name="Davis N.W."/>
            <person name="Kirkpatrick H.A."/>
            <person name="Goeden M.A."/>
            <person name="Rose D.J."/>
            <person name="Mau B."/>
            <person name="Shao Y."/>
        </authorList>
    </citation>
    <scope>NUCLEOTIDE SEQUENCE [LARGE SCALE GENOMIC DNA]</scope>
    <source>
        <strain>K12 / MG1655 / ATCC 47076</strain>
    </source>
</reference>
<reference key="5">
    <citation type="journal article" date="2006" name="Mol. Syst. Biol.">
        <title>Highly accurate genome sequences of Escherichia coli K-12 strains MG1655 and W3110.</title>
        <authorList>
            <person name="Hayashi K."/>
            <person name="Morooka N."/>
            <person name="Yamamoto Y."/>
            <person name="Fujita K."/>
            <person name="Isono K."/>
            <person name="Choi S."/>
            <person name="Ohtsubo E."/>
            <person name="Baba T."/>
            <person name="Wanner B.L."/>
            <person name="Mori H."/>
            <person name="Horiuchi T."/>
        </authorList>
    </citation>
    <scope>NUCLEOTIDE SEQUENCE [LARGE SCALE GENOMIC DNA]</scope>
    <source>
        <strain>K12 / W3110 / ATCC 27325 / DSM 5911</strain>
    </source>
</reference>
<reference key="6">
    <citation type="journal article" date="1970" name="Biochem. J.">
        <title>The role of the phosphoenolpyruvate phosphotransferase system in the transport of N-acetyl-D-glucosamine by Escherichia coli.</title>
        <authorList>
            <person name="White R.J."/>
        </authorList>
    </citation>
    <scope>FUNCTION</scope>
    <scope>CATALYTIC ACTIVITY</scope>
</reference>
<reference key="7">
    <citation type="journal article" date="1979" name="Antimicrob. Agents Chemother.">
        <title>Phosphorylation of streptozotocin during uptake via the phosphoenolpyruvate: sugar phosphotransferase system in Escherichia coli.</title>
        <authorList>
            <person name="Ammer J."/>
            <person name="Brennenstuhl M."/>
            <person name="Schindler P."/>
            <person name="Hoeltje J.V."/>
            <person name="Zaehner H."/>
        </authorList>
    </citation>
    <scope>FUNCTION</scope>
    <scope>ACTIVITY REGULATION</scope>
</reference>
<reference key="8">
    <citation type="journal article" date="1991" name="Mol. Microbiol.">
        <title>Repression and induction of the nag regulon of Escherichia coli K-12: the roles of nagC and nagA in maintenance of the uninduced state.</title>
        <authorList>
            <person name="Plumbridge J.A."/>
        </authorList>
    </citation>
    <scope>INDUCTION</scope>
</reference>
<reference key="9">
    <citation type="journal article" date="1995" name="J. Mol. Biol.">
        <title>Nag repressor-operator interactions: protein-DNA contacts cover more than two turns of the DNA helix.</title>
        <authorList>
            <person name="Plumbridge J."/>
            <person name="Kolb A."/>
        </authorList>
    </citation>
    <scope>INDUCTION</scope>
</reference>
<reference key="10">
    <citation type="journal article" date="2005" name="Science">
        <title>Global topology analysis of the Escherichia coli inner membrane proteome.</title>
        <authorList>
            <person name="Daley D.O."/>
            <person name="Rapp M."/>
            <person name="Granseth E."/>
            <person name="Melen K."/>
            <person name="Drew D."/>
            <person name="von Heijne G."/>
        </authorList>
    </citation>
    <scope>SUBCELLULAR LOCATION</scope>
    <source>
        <strain>K12 / MG1655 / ATCC 47076</strain>
    </source>
</reference>
<reference key="11">
    <citation type="journal article" date="2009" name="J. Bacteriol.">
        <title>An alternative route for recycling of N-acetylglucosamine from peptidoglycan involves the N-acetylglucosamine phosphotransferase system in Escherichia coli.</title>
        <authorList>
            <person name="Plumbridge J."/>
        </authorList>
    </citation>
    <scope>FUNCTION</scope>
    <scope>DISRUPTION PHENOTYPE</scope>
</reference>
<reference key="12">
    <citation type="journal article" date="2015" name="Proteomics">
        <title>Proteome-wide analysis of the amino terminal status of Escherichia coli proteins at the steady-state and upon deformylation inhibition.</title>
        <authorList>
            <person name="Bienvenut W.V."/>
            <person name="Giglione C."/>
            <person name="Meinnel T."/>
        </authorList>
    </citation>
    <scope>FORMYLATION AT MET-1</scope>
    <source>
        <strain>K12 / CAG12184</strain>
    </source>
</reference>
<protein>
    <recommendedName>
        <fullName evidence="13">PTS system N-acetylglucosamine-specific EIICBA component</fullName>
    </recommendedName>
    <alternativeName>
        <fullName evidence="13">EIICBA-Nag</fullName>
        <shortName evidence="13">EII-Nag</shortName>
    </alternativeName>
    <domain>
        <recommendedName>
            <fullName evidence="13">N-acetylglucosamine permease IIC component</fullName>
        </recommendedName>
        <alternativeName>
            <fullName evidence="13">PTS system N-acetylglucosamine-specific EIIC component</fullName>
        </alternativeName>
    </domain>
    <domain>
        <recommendedName>
            <fullName evidence="13">N-acetylglucosamine-specific phosphotransferase enzyme IIB component</fullName>
            <ecNumber evidence="11">2.7.1.193</ecNumber>
        </recommendedName>
        <alternativeName>
            <fullName evidence="13">PTS system N-acetylglucosamine-specific EIIB component</fullName>
        </alternativeName>
    </domain>
    <domain>
        <recommendedName>
            <fullName evidence="13">N-acetylglucosamine-specific phosphotransferase enzyme IIA component</fullName>
        </recommendedName>
        <alternativeName>
            <fullName evidence="13">PTS system N-acetylglucosamine-specific EIIA component</fullName>
        </alternativeName>
    </domain>
</protein>
<feature type="chain" id="PRO_0000186475" description="PTS system N-acetylglucosamine-specific EIICBA component">
    <location>
        <begin position="1"/>
        <end position="648"/>
    </location>
</feature>
<feature type="transmembrane region" description="Helical" evidence="5">
    <location>
        <begin position="16"/>
        <end position="36"/>
    </location>
</feature>
<feature type="transmembrane region" description="Helical" evidence="5">
    <location>
        <begin position="38"/>
        <end position="58"/>
    </location>
</feature>
<feature type="transmembrane region" description="Helical" evidence="5">
    <location>
        <begin position="70"/>
        <end position="90"/>
    </location>
</feature>
<feature type="transmembrane region" description="Helical" evidence="5">
    <location>
        <begin position="92"/>
        <end position="112"/>
    </location>
</feature>
<feature type="transmembrane region" description="Helical" evidence="5">
    <location>
        <begin position="132"/>
        <end position="152"/>
    </location>
</feature>
<feature type="transmembrane region" description="Helical" evidence="5">
    <location>
        <begin position="159"/>
        <end position="179"/>
    </location>
</feature>
<feature type="transmembrane region" description="Helical" evidence="5">
    <location>
        <begin position="192"/>
        <end position="212"/>
    </location>
</feature>
<feature type="transmembrane region" description="Helical" evidence="5">
    <location>
        <begin position="232"/>
        <end position="252"/>
    </location>
</feature>
<feature type="transmembrane region" description="Helical" evidence="5">
    <location>
        <begin position="260"/>
        <end position="280"/>
    </location>
</feature>
<feature type="transmembrane region" description="Helical" evidence="5">
    <location>
        <begin position="282"/>
        <end position="302"/>
    </location>
</feature>
<feature type="transmembrane region" description="Helical" evidence="5">
    <location>
        <begin position="303"/>
        <end position="323"/>
    </location>
</feature>
<feature type="transmembrane region" description="Helical" evidence="5">
    <location>
        <begin position="339"/>
        <end position="359"/>
    </location>
</feature>
<feature type="domain" description="PTS EIIC type-1" evidence="5">
    <location>
        <begin position="1"/>
        <end position="371"/>
    </location>
</feature>
<feature type="domain" description="PTS EIIB type-1" evidence="4">
    <location>
        <begin position="390"/>
        <end position="472"/>
    </location>
</feature>
<feature type="domain" description="PTS EIIA type-1" evidence="3">
    <location>
        <begin position="517"/>
        <end position="621"/>
    </location>
</feature>
<feature type="active site" description="Phosphocysteine intermediate; for EIIB activity" evidence="4">
    <location>
        <position position="412"/>
    </location>
</feature>
<feature type="active site" description="Tele-phosphohistidine intermediate; for EIIA activity" evidence="3 15">
    <location>
        <position position="569"/>
    </location>
</feature>
<feature type="binding site" evidence="1">
    <location>
        <position position="554"/>
    </location>
    <ligand>
        <name>Zn(2+)</name>
        <dbReference type="ChEBI" id="CHEBI:29105"/>
    </ligand>
</feature>
<feature type="binding site" evidence="1">
    <location>
        <position position="569"/>
    </location>
    <ligand>
        <name>Zn(2+)</name>
        <dbReference type="ChEBI" id="CHEBI:29105"/>
    </ligand>
</feature>
<feature type="site" description="Important for phospho-donor activity" evidence="1">
    <location>
        <position position="554"/>
    </location>
</feature>
<feature type="modified residue" description="N-formylmethionine" evidence="10">
    <location>
        <position position="1"/>
    </location>
</feature>
<feature type="modified residue" description="Phosphocysteine; by EIIA" evidence="2 14">
    <location>
        <position position="412"/>
    </location>
</feature>
<feature type="modified residue" description="Phosphohistidine; by HPr" evidence="1 14">
    <location>
        <position position="569"/>
    </location>
</feature>
<evidence type="ECO:0000250" key="1">
    <source>
        <dbReference type="UniProtKB" id="P69783"/>
    </source>
</evidence>
<evidence type="ECO:0000250" key="2">
    <source>
        <dbReference type="UniProtKB" id="P69786"/>
    </source>
</evidence>
<evidence type="ECO:0000255" key="3">
    <source>
        <dbReference type="PROSITE-ProRule" id="PRU00416"/>
    </source>
</evidence>
<evidence type="ECO:0000255" key="4">
    <source>
        <dbReference type="PROSITE-ProRule" id="PRU00421"/>
    </source>
</evidence>
<evidence type="ECO:0000255" key="5">
    <source>
        <dbReference type="PROSITE-ProRule" id="PRU00426"/>
    </source>
</evidence>
<evidence type="ECO:0000269" key="6">
    <source>
    </source>
</evidence>
<evidence type="ECO:0000269" key="7">
    <source>
    </source>
</evidence>
<evidence type="ECO:0000269" key="8">
    <source>
    </source>
</evidence>
<evidence type="ECO:0000269" key="9">
    <source>
    </source>
</evidence>
<evidence type="ECO:0000269" key="10">
    <source>
    </source>
</evidence>
<evidence type="ECO:0000269" key="11">
    <source>
    </source>
</evidence>
<evidence type="ECO:0000269" key="12">
    <source>
    </source>
</evidence>
<evidence type="ECO:0000303" key="13">
    <source>
    </source>
</evidence>
<evidence type="ECO:0000305" key="14"/>
<evidence type="ECO:0000305" key="15">
    <source>
    </source>
</evidence>
<keyword id="KW-0997">Cell inner membrane</keyword>
<keyword id="KW-1003">Cell membrane</keyword>
<keyword id="KW-0291">Formylation</keyword>
<keyword id="KW-0418">Kinase</keyword>
<keyword id="KW-0472">Membrane</keyword>
<keyword id="KW-0479">Metal-binding</keyword>
<keyword id="KW-0597">Phosphoprotein</keyword>
<keyword id="KW-0598">Phosphotransferase system</keyword>
<keyword id="KW-1185">Reference proteome</keyword>
<keyword id="KW-0762">Sugar transport</keyword>
<keyword id="KW-0808">Transferase</keyword>
<keyword id="KW-0812">Transmembrane</keyword>
<keyword id="KW-1133">Transmembrane helix</keyword>
<keyword id="KW-0813">Transport</keyword>
<keyword id="KW-0862">Zinc</keyword>
<organism>
    <name type="scientific">Escherichia coli (strain K12)</name>
    <dbReference type="NCBI Taxonomy" id="83333"/>
    <lineage>
        <taxon>Bacteria</taxon>
        <taxon>Pseudomonadati</taxon>
        <taxon>Pseudomonadota</taxon>
        <taxon>Gammaproteobacteria</taxon>
        <taxon>Enterobacterales</taxon>
        <taxon>Enterobacteriaceae</taxon>
        <taxon>Escherichia</taxon>
    </lineage>
</organism>
<gene>
    <name evidence="13" type="primary">nagE</name>
    <name type="synonym">pstN</name>
    <name type="ordered locus">b0679</name>
    <name type="ordered locus">JW0665</name>
</gene>
<proteinExistence type="evidence at protein level"/>
<name>PTW3C_ECOLI</name>